<gene>
    <name type="ORF">CG10055</name>
</gene>
<evidence type="ECO:0000250" key="1"/>
<evidence type="ECO:0000256" key="2">
    <source>
        <dbReference type="SAM" id="MobiDB-lite"/>
    </source>
</evidence>
<evidence type="ECO:0000305" key="3"/>
<organism>
    <name type="scientific">Drosophila melanogaster</name>
    <name type="common">Fruit fly</name>
    <dbReference type="NCBI Taxonomy" id="7227"/>
    <lineage>
        <taxon>Eukaryota</taxon>
        <taxon>Metazoa</taxon>
        <taxon>Ecdysozoa</taxon>
        <taxon>Arthropoda</taxon>
        <taxon>Hexapoda</taxon>
        <taxon>Insecta</taxon>
        <taxon>Pterygota</taxon>
        <taxon>Neoptera</taxon>
        <taxon>Endopterygota</taxon>
        <taxon>Diptera</taxon>
        <taxon>Brachycera</taxon>
        <taxon>Muscomorpha</taxon>
        <taxon>Ephydroidea</taxon>
        <taxon>Drosophilidae</taxon>
        <taxon>Drosophila</taxon>
        <taxon>Sophophora</taxon>
    </lineage>
</organism>
<keyword id="KW-1185">Reference proteome</keyword>
<sequence length="608" mass="69146">MLNGQIAHSYLENSCTLIIPRPPVLNQSSKSAQPAAAAAASSSAGEEFGQEAGSGLAEAEALHVDRIRNCDIFVDAHDLYFYADVKLYKFHSRRTFDLRELKTLLIKFNTTENHYQICLRCLPLTAGAQEGPGGERGGGGGTGDAAKQWNSRKEYIAAFLHLPTLSANLPDKQPLVQEWKLKRITDQCQLQLDDHERTYKLTNNFGYGYASEYSGPLDLSELDRATCRVSEPHRMSPIQRRQERVVDEMKRFSREQYKINFVELQVPSGHQNPLRYKPKIYETSMTQEQAHLLHNISRMQTREQQPCDVFRQNEIDCGLISILLAICYDVRTTNNEPTCESGWTRSILCPLYCYFEQFDNYRDVLVAFLRRMITYPLYRNFELGRQCVRDAIEVLKGGRNWLINQLLLTHQQFASSDPSRDSFNNYYLEDYIRYVTSPSACSDEHMRLLARNLKNVLMDVNKQHLGLGVTEIETELIKELMQEMRIDAGSQGSSPQQQHGDDDLDLDNDTSGQEDETTTDDESVITDSFYSVDMDMRLIENEIVYEDDEEDEDDDEDGDDDEDGDGDEDEDEDEDEDDSSSSTTTSSEAEGNSVIEQCSNSETAASTT</sequence>
<protein>
    <recommendedName>
        <fullName>Protein SHQ1 homolog</fullName>
    </recommendedName>
</protein>
<comment type="function">
    <text evidence="1">Required for the quantitative accumulation of H/ACA ribonucleoproteins (RNPs).</text>
</comment>
<comment type="similarity">
    <text evidence="3">Belongs to the SHQ1 family.</text>
</comment>
<comment type="sequence caution" evidence="3">
    <conflict type="erroneous termination">
        <sequence resource="EMBL-CDS" id="AAM50735"/>
    </conflict>
    <text>Truncated C-terminus.</text>
</comment>
<proteinExistence type="evidence at transcript level"/>
<feature type="chain" id="PRO_0000302827" description="Protein SHQ1 homolog">
    <location>
        <begin position="1"/>
        <end position="608"/>
    </location>
</feature>
<feature type="region of interest" description="Disordered" evidence="2">
    <location>
        <begin position="487"/>
        <end position="531"/>
    </location>
</feature>
<feature type="region of interest" description="Disordered" evidence="2">
    <location>
        <begin position="543"/>
        <end position="608"/>
    </location>
</feature>
<feature type="compositionally biased region" description="Low complexity" evidence="2">
    <location>
        <begin position="489"/>
        <end position="498"/>
    </location>
</feature>
<feature type="compositionally biased region" description="Acidic residues" evidence="2">
    <location>
        <begin position="502"/>
        <end position="524"/>
    </location>
</feature>
<feature type="compositionally biased region" description="Acidic residues" evidence="2">
    <location>
        <begin position="543"/>
        <end position="579"/>
    </location>
</feature>
<feature type="compositionally biased region" description="Polar residues" evidence="2">
    <location>
        <begin position="588"/>
        <end position="608"/>
    </location>
</feature>
<reference key="1">
    <citation type="journal article" date="2000" name="Science">
        <title>The genome sequence of Drosophila melanogaster.</title>
        <authorList>
            <person name="Adams M.D."/>
            <person name="Celniker S.E."/>
            <person name="Holt R.A."/>
            <person name="Evans C.A."/>
            <person name="Gocayne J.D."/>
            <person name="Amanatides P.G."/>
            <person name="Scherer S.E."/>
            <person name="Li P.W."/>
            <person name="Hoskins R.A."/>
            <person name="Galle R.F."/>
            <person name="George R.A."/>
            <person name="Lewis S.E."/>
            <person name="Richards S."/>
            <person name="Ashburner M."/>
            <person name="Henderson S.N."/>
            <person name="Sutton G.G."/>
            <person name="Wortman J.R."/>
            <person name="Yandell M.D."/>
            <person name="Zhang Q."/>
            <person name="Chen L.X."/>
            <person name="Brandon R.C."/>
            <person name="Rogers Y.-H.C."/>
            <person name="Blazej R.G."/>
            <person name="Champe M."/>
            <person name="Pfeiffer B.D."/>
            <person name="Wan K.H."/>
            <person name="Doyle C."/>
            <person name="Baxter E.G."/>
            <person name="Helt G."/>
            <person name="Nelson C.R."/>
            <person name="Miklos G.L.G."/>
            <person name="Abril J.F."/>
            <person name="Agbayani A."/>
            <person name="An H.-J."/>
            <person name="Andrews-Pfannkoch C."/>
            <person name="Baldwin D."/>
            <person name="Ballew R.M."/>
            <person name="Basu A."/>
            <person name="Baxendale J."/>
            <person name="Bayraktaroglu L."/>
            <person name="Beasley E.M."/>
            <person name="Beeson K.Y."/>
            <person name="Benos P.V."/>
            <person name="Berman B.P."/>
            <person name="Bhandari D."/>
            <person name="Bolshakov S."/>
            <person name="Borkova D."/>
            <person name="Botchan M.R."/>
            <person name="Bouck J."/>
            <person name="Brokstein P."/>
            <person name="Brottier P."/>
            <person name="Burtis K.C."/>
            <person name="Busam D.A."/>
            <person name="Butler H."/>
            <person name="Cadieu E."/>
            <person name="Center A."/>
            <person name="Chandra I."/>
            <person name="Cherry J.M."/>
            <person name="Cawley S."/>
            <person name="Dahlke C."/>
            <person name="Davenport L.B."/>
            <person name="Davies P."/>
            <person name="de Pablos B."/>
            <person name="Delcher A."/>
            <person name="Deng Z."/>
            <person name="Mays A.D."/>
            <person name="Dew I."/>
            <person name="Dietz S.M."/>
            <person name="Dodson K."/>
            <person name="Doup L.E."/>
            <person name="Downes M."/>
            <person name="Dugan-Rocha S."/>
            <person name="Dunkov B.C."/>
            <person name="Dunn P."/>
            <person name="Durbin K.J."/>
            <person name="Evangelista C.C."/>
            <person name="Ferraz C."/>
            <person name="Ferriera S."/>
            <person name="Fleischmann W."/>
            <person name="Fosler C."/>
            <person name="Gabrielian A.E."/>
            <person name="Garg N.S."/>
            <person name="Gelbart W.M."/>
            <person name="Glasser K."/>
            <person name="Glodek A."/>
            <person name="Gong F."/>
            <person name="Gorrell J.H."/>
            <person name="Gu Z."/>
            <person name="Guan P."/>
            <person name="Harris M."/>
            <person name="Harris N.L."/>
            <person name="Harvey D.A."/>
            <person name="Heiman T.J."/>
            <person name="Hernandez J.R."/>
            <person name="Houck J."/>
            <person name="Hostin D."/>
            <person name="Houston K.A."/>
            <person name="Howland T.J."/>
            <person name="Wei M.-H."/>
            <person name="Ibegwam C."/>
            <person name="Jalali M."/>
            <person name="Kalush F."/>
            <person name="Karpen G.H."/>
            <person name="Ke Z."/>
            <person name="Kennison J.A."/>
            <person name="Ketchum K.A."/>
            <person name="Kimmel B.E."/>
            <person name="Kodira C.D."/>
            <person name="Kraft C.L."/>
            <person name="Kravitz S."/>
            <person name="Kulp D."/>
            <person name="Lai Z."/>
            <person name="Lasko P."/>
            <person name="Lei Y."/>
            <person name="Levitsky A.A."/>
            <person name="Li J.H."/>
            <person name="Li Z."/>
            <person name="Liang Y."/>
            <person name="Lin X."/>
            <person name="Liu X."/>
            <person name="Mattei B."/>
            <person name="McIntosh T.C."/>
            <person name="McLeod M.P."/>
            <person name="McPherson D."/>
            <person name="Merkulov G."/>
            <person name="Milshina N.V."/>
            <person name="Mobarry C."/>
            <person name="Morris J."/>
            <person name="Moshrefi A."/>
            <person name="Mount S.M."/>
            <person name="Moy M."/>
            <person name="Murphy B."/>
            <person name="Murphy L."/>
            <person name="Muzny D.M."/>
            <person name="Nelson D.L."/>
            <person name="Nelson D.R."/>
            <person name="Nelson K.A."/>
            <person name="Nixon K."/>
            <person name="Nusskern D.R."/>
            <person name="Pacleb J.M."/>
            <person name="Palazzolo M."/>
            <person name="Pittman G.S."/>
            <person name="Pan S."/>
            <person name="Pollard J."/>
            <person name="Puri V."/>
            <person name="Reese M.G."/>
            <person name="Reinert K."/>
            <person name="Remington K."/>
            <person name="Saunders R.D.C."/>
            <person name="Scheeler F."/>
            <person name="Shen H."/>
            <person name="Shue B.C."/>
            <person name="Siden-Kiamos I."/>
            <person name="Simpson M."/>
            <person name="Skupski M.P."/>
            <person name="Smith T.J."/>
            <person name="Spier E."/>
            <person name="Spradling A.C."/>
            <person name="Stapleton M."/>
            <person name="Strong R."/>
            <person name="Sun E."/>
            <person name="Svirskas R."/>
            <person name="Tector C."/>
            <person name="Turner R."/>
            <person name="Venter E."/>
            <person name="Wang A.H."/>
            <person name="Wang X."/>
            <person name="Wang Z.-Y."/>
            <person name="Wassarman D.A."/>
            <person name="Weinstock G.M."/>
            <person name="Weissenbach J."/>
            <person name="Williams S.M."/>
            <person name="Woodage T."/>
            <person name="Worley K.C."/>
            <person name="Wu D."/>
            <person name="Yang S."/>
            <person name="Yao Q.A."/>
            <person name="Ye J."/>
            <person name="Yeh R.-F."/>
            <person name="Zaveri J.S."/>
            <person name="Zhan M."/>
            <person name="Zhang G."/>
            <person name="Zhao Q."/>
            <person name="Zheng L."/>
            <person name="Zheng X.H."/>
            <person name="Zhong F.N."/>
            <person name="Zhong W."/>
            <person name="Zhou X."/>
            <person name="Zhu S.C."/>
            <person name="Zhu X."/>
            <person name="Smith H.O."/>
            <person name="Gibbs R.A."/>
            <person name="Myers E.W."/>
            <person name="Rubin G.M."/>
            <person name="Venter J.C."/>
        </authorList>
    </citation>
    <scope>NUCLEOTIDE SEQUENCE [LARGE SCALE GENOMIC DNA]</scope>
    <source>
        <strain>Berkeley</strain>
    </source>
</reference>
<reference key="2">
    <citation type="journal article" date="2002" name="Genome Biol.">
        <title>Annotation of the Drosophila melanogaster euchromatic genome: a systematic review.</title>
        <authorList>
            <person name="Misra S."/>
            <person name="Crosby M.A."/>
            <person name="Mungall C.J."/>
            <person name="Matthews B.B."/>
            <person name="Campbell K.S."/>
            <person name="Hradecky P."/>
            <person name="Huang Y."/>
            <person name="Kaminker J.S."/>
            <person name="Millburn G.H."/>
            <person name="Prochnik S.E."/>
            <person name="Smith C.D."/>
            <person name="Tupy J.L."/>
            <person name="Whitfield E.J."/>
            <person name="Bayraktaroglu L."/>
            <person name="Berman B.P."/>
            <person name="Bettencourt B.R."/>
            <person name="Celniker S.E."/>
            <person name="de Grey A.D.N.J."/>
            <person name="Drysdale R.A."/>
            <person name="Harris N.L."/>
            <person name="Richter J."/>
            <person name="Russo S."/>
            <person name="Schroeder A.J."/>
            <person name="Shu S.Q."/>
            <person name="Stapleton M."/>
            <person name="Yamada C."/>
            <person name="Ashburner M."/>
            <person name="Gelbart W.M."/>
            <person name="Rubin G.M."/>
            <person name="Lewis S.E."/>
        </authorList>
    </citation>
    <scope>GENOME REANNOTATION</scope>
    <source>
        <strain>Berkeley</strain>
    </source>
</reference>
<reference key="3">
    <citation type="journal article" date="2002" name="Genome Biol.">
        <title>A Drosophila full-length cDNA resource.</title>
        <authorList>
            <person name="Stapleton M."/>
            <person name="Carlson J.W."/>
            <person name="Brokstein P."/>
            <person name="Yu C."/>
            <person name="Champe M."/>
            <person name="George R.A."/>
            <person name="Guarin H."/>
            <person name="Kronmiller B."/>
            <person name="Pacleb J.M."/>
            <person name="Park S."/>
            <person name="Wan K.H."/>
            <person name="Rubin G.M."/>
            <person name="Celniker S.E."/>
        </authorList>
    </citation>
    <scope>NUCLEOTIDE SEQUENCE [LARGE SCALE MRNA]</scope>
    <source>
        <strain>Berkeley</strain>
        <tissue>Ovary</tissue>
    </source>
</reference>
<dbReference type="EMBL" id="AE014297">
    <property type="protein sequence ID" value="AAF54051.1"/>
    <property type="molecule type" value="Genomic_DNA"/>
</dbReference>
<dbReference type="EMBL" id="AY118875">
    <property type="protein sequence ID" value="AAM50735.1"/>
    <property type="status" value="ALT_SEQ"/>
    <property type="molecule type" value="mRNA"/>
</dbReference>
<dbReference type="RefSeq" id="NP_649703.1">
    <property type="nucleotide sequence ID" value="NM_141446.2"/>
</dbReference>
<dbReference type="SMR" id="Q9VI74"/>
<dbReference type="BioGRID" id="66057">
    <property type="interactions" value="1"/>
</dbReference>
<dbReference type="FunCoup" id="Q9VI74">
    <property type="interactions" value="1102"/>
</dbReference>
<dbReference type="STRING" id="7227.FBpp0081123"/>
<dbReference type="PaxDb" id="7227-FBpp0081123"/>
<dbReference type="DNASU" id="40862"/>
<dbReference type="EnsemblMetazoa" id="FBtr0081605">
    <property type="protein sequence ID" value="FBpp0081123"/>
    <property type="gene ID" value="FBgn0037482"/>
</dbReference>
<dbReference type="GeneID" id="40862"/>
<dbReference type="KEGG" id="dme:Dmel_CG10055"/>
<dbReference type="UCSC" id="CG10055-RA">
    <property type="organism name" value="d. melanogaster"/>
</dbReference>
<dbReference type="AGR" id="FB:FBgn0037482"/>
<dbReference type="FlyBase" id="FBgn0037482">
    <property type="gene designation" value="CG10055"/>
</dbReference>
<dbReference type="VEuPathDB" id="VectorBase:FBgn0037482"/>
<dbReference type="eggNOG" id="KOG3247">
    <property type="taxonomic scope" value="Eukaryota"/>
</dbReference>
<dbReference type="GeneTree" id="ENSGT00390000007605"/>
<dbReference type="HOGENOM" id="CLU_449237_0_0_1"/>
<dbReference type="InParanoid" id="Q9VI74"/>
<dbReference type="OMA" id="RNWLINQ"/>
<dbReference type="OrthoDB" id="73639at2759"/>
<dbReference type="PhylomeDB" id="Q9VI74"/>
<dbReference type="Reactome" id="R-DME-171319">
    <property type="pathway name" value="Telomere Extension By Telomerase"/>
</dbReference>
<dbReference type="BioGRID-ORCS" id="40862">
    <property type="hits" value="1 hit in 1 CRISPR screen"/>
</dbReference>
<dbReference type="GenomeRNAi" id="40862"/>
<dbReference type="PRO" id="PR:Q9VI74"/>
<dbReference type="Proteomes" id="UP000000803">
    <property type="component" value="Chromosome 3R"/>
</dbReference>
<dbReference type="Bgee" id="FBgn0037482">
    <property type="expression patterns" value="Expressed in mid-late elongation-stage spermatid (Drosophila) in testis and 103 other cell types or tissues"/>
</dbReference>
<dbReference type="ExpressionAtlas" id="Q9VI74">
    <property type="expression patterns" value="baseline and differential"/>
</dbReference>
<dbReference type="GO" id="GO:0005737">
    <property type="term" value="C:cytoplasm"/>
    <property type="evidence" value="ECO:0000318"/>
    <property type="project" value="GO_Central"/>
</dbReference>
<dbReference type="GO" id="GO:0005654">
    <property type="term" value="C:nucleoplasm"/>
    <property type="evidence" value="ECO:0000318"/>
    <property type="project" value="GO_Central"/>
</dbReference>
<dbReference type="GO" id="GO:0051082">
    <property type="term" value="F:unfolded protein binding"/>
    <property type="evidence" value="ECO:0000318"/>
    <property type="project" value="GO_Central"/>
</dbReference>
<dbReference type="GO" id="GO:0000493">
    <property type="term" value="P:box H/ACA snoRNP assembly"/>
    <property type="evidence" value="ECO:0000318"/>
    <property type="project" value="GO_Central"/>
</dbReference>
<dbReference type="GO" id="GO:0022618">
    <property type="term" value="P:protein-RNA complex assembly"/>
    <property type="evidence" value="ECO:0000250"/>
    <property type="project" value="UniProtKB"/>
</dbReference>
<dbReference type="InterPro" id="IPR039742">
    <property type="entry name" value="Shq1"/>
</dbReference>
<dbReference type="InterPro" id="IPR007009">
    <property type="entry name" value="Shq1_C"/>
</dbReference>
<dbReference type="PANTHER" id="PTHR12967">
    <property type="entry name" value="PROTEIN SHQ1 HOMOLOG"/>
    <property type="match status" value="1"/>
</dbReference>
<dbReference type="PANTHER" id="PTHR12967:SF0">
    <property type="entry name" value="PROTEIN SHQ1 HOMOLOG"/>
    <property type="match status" value="1"/>
</dbReference>
<dbReference type="Pfam" id="PF04925">
    <property type="entry name" value="SHQ1"/>
    <property type="match status" value="1"/>
</dbReference>
<accession>Q9VI74</accession>
<accession>Q8MSE2</accession>
<name>SHQ1_DROME</name>